<feature type="chain" id="PRO_1000122030" description="Chromosomal replication initiator protein DnaA">
    <location>
        <begin position="1"/>
        <end position="443"/>
    </location>
</feature>
<feature type="region of interest" description="Domain I, interacts with DnaA modulators" evidence="1">
    <location>
        <begin position="1"/>
        <end position="73"/>
    </location>
</feature>
<feature type="region of interest" description="Domain II" evidence="1">
    <location>
        <begin position="73"/>
        <end position="106"/>
    </location>
</feature>
<feature type="region of interest" description="Domain III, AAA+ region" evidence="1">
    <location>
        <begin position="107"/>
        <end position="323"/>
    </location>
</feature>
<feature type="region of interest" description="Domain IV, binds dsDNA" evidence="1">
    <location>
        <begin position="324"/>
        <end position="443"/>
    </location>
</feature>
<feature type="binding site" evidence="1">
    <location>
        <position position="151"/>
    </location>
    <ligand>
        <name>ATP</name>
        <dbReference type="ChEBI" id="CHEBI:30616"/>
    </ligand>
</feature>
<feature type="binding site" evidence="1">
    <location>
        <position position="153"/>
    </location>
    <ligand>
        <name>ATP</name>
        <dbReference type="ChEBI" id="CHEBI:30616"/>
    </ligand>
</feature>
<feature type="binding site" evidence="1">
    <location>
        <position position="154"/>
    </location>
    <ligand>
        <name>ATP</name>
        <dbReference type="ChEBI" id="CHEBI:30616"/>
    </ligand>
</feature>
<feature type="binding site" evidence="1">
    <location>
        <position position="155"/>
    </location>
    <ligand>
        <name>ATP</name>
        <dbReference type="ChEBI" id="CHEBI:30616"/>
    </ligand>
</feature>
<sequence length="443" mass="51385">MYGDHRQIWERIVEVIKSELTPTSYNTWLVHIKPLAIIDDVLFLSTPNTFTKNIINGRYINIIYDAASKATNKLYEIKILSEDEEEYREIKESIEKENLTESTTLSTLNPKYTFDTFVVGNSNKLAHAACLAVAQAPAKAYNPLFIYGGVGLGKTHLMHAIGHFINKHQSGYKIMYVTSETFTNELVNSIKDDKNEEFRNKYRNIDVLLIDDIQFIAKKERTQEEFFHTFNTLYEANKQIVISSDRPPKEIPTLEERLRSRFEWGLIADIQPPDYETRIAILKKKAQTENLNIPDEVLAYVAEKIQSNIRELEGALIRIVAFSNLTKANIDLELAKHALKEIVSNKTREITVKLIQEEVCKYYNIKLEDFRSRKRTKNIAYPRQIAMYLARELTDLSLPKIGEEFGKDHTTVIHAYEKISNEIKQDELLSRQIEELKKRIKGY</sequence>
<name>DNAA_THEPX</name>
<accession>B0K0W8</accession>
<organism>
    <name type="scientific">Thermoanaerobacter sp. (strain X514)</name>
    <dbReference type="NCBI Taxonomy" id="399726"/>
    <lineage>
        <taxon>Bacteria</taxon>
        <taxon>Bacillati</taxon>
        <taxon>Bacillota</taxon>
        <taxon>Clostridia</taxon>
        <taxon>Thermoanaerobacterales</taxon>
        <taxon>Thermoanaerobacteraceae</taxon>
        <taxon>Thermoanaerobacter</taxon>
    </lineage>
</organism>
<reference key="1">
    <citation type="submission" date="2008-01" db="EMBL/GenBank/DDBJ databases">
        <title>Complete sequence of Thermoanaerobacter sp. X514.</title>
        <authorList>
            <consortium name="US DOE Joint Genome Institute"/>
            <person name="Copeland A."/>
            <person name="Lucas S."/>
            <person name="Lapidus A."/>
            <person name="Barry K."/>
            <person name="Glavina del Rio T."/>
            <person name="Dalin E."/>
            <person name="Tice H."/>
            <person name="Pitluck S."/>
            <person name="Bruce D."/>
            <person name="Goodwin L."/>
            <person name="Saunders E."/>
            <person name="Brettin T."/>
            <person name="Detter J.C."/>
            <person name="Han C."/>
            <person name="Schmutz J."/>
            <person name="Larimer F."/>
            <person name="Land M."/>
            <person name="Hauser L."/>
            <person name="Kyrpides N."/>
            <person name="Kim E."/>
            <person name="Hemme C."/>
            <person name="Fields M.W."/>
            <person name="He Z."/>
            <person name="Zhou J."/>
            <person name="Richardson P."/>
        </authorList>
    </citation>
    <scope>NUCLEOTIDE SEQUENCE [LARGE SCALE GENOMIC DNA]</scope>
    <source>
        <strain>X514</strain>
    </source>
</reference>
<comment type="function">
    <text evidence="1">Plays an essential role in the initiation and regulation of chromosomal replication. ATP-DnaA binds to the origin of replication (oriC) to initiate formation of the DNA replication initiation complex once per cell cycle. Binds the DnaA box (a 9 base pair repeat at the origin) and separates the double-stranded (ds)DNA. Forms a right-handed helical filament on oriC DNA; dsDNA binds to the exterior of the filament while single-stranded (ss)DNA is stabiized in the filament's interior. The ATP-DnaA-oriC complex binds and stabilizes one strand of the AT-rich DNA unwinding element (DUE), permitting loading of DNA polymerase. After initiation quickly degrades to an ADP-DnaA complex that is not apt for DNA replication. Binds acidic phospholipids.</text>
</comment>
<comment type="subunit">
    <text evidence="1">Oligomerizes as a right-handed, spiral filament on DNA at oriC.</text>
</comment>
<comment type="subcellular location">
    <subcellularLocation>
        <location evidence="1">Cytoplasm</location>
    </subcellularLocation>
</comment>
<comment type="domain">
    <text evidence="1">Domain I is involved in oligomerization and binding regulators, domain II is flexibile and of varying length in different bacteria, domain III forms the AAA+ region, while domain IV binds dsDNA.</text>
</comment>
<comment type="similarity">
    <text evidence="1">Belongs to the DnaA family.</text>
</comment>
<proteinExistence type="inferred from homology"/>
<gene>
    <name evidence="1" type="primary">dnaA</name>
    <name type="ordered locus">Teth514_0001</name>
</gene>
<dbReference type="EMBL" id="CP000923">
    <property type="protein sequence ID" value="ABY91325.1"/>
    <property type="molecule type" value="Genomic_DNA"/>
</dbReference>
<dbReference type="RefSeq" id="WP_009052052.1">
    <property type="nucleotide sequence ID" value="NC_010320.1"/>
</dbReference>
<dbReference type="SMR" id="B0K0W8"/>
<dbReference type="KEGG" id="tex:Teth514_0001"/>
<dbReference type="HOGENOM" id="CLU_026910_3_1_9"/>
<dbReference type="Proteomes" id="UP000002155">
    <property type="component" value="Chromosome"/>
</dbReference>
<dbReference type="GO" id="GO:0005737">
    <property type="term" value="C:cytoplasm"/>
    <property type="evidence" value="ECO:0007669"/>
    <property type="project" value="UniProtKB-SubCell"/>
</dbReference>
<dbReference type="GO" id="GO:0005886">
    <property type="term" value="C:plasma membrane"/>
    <property type="evidence" value="ECO:0007669"/>
    <property type="project" value="TreeGrafter"/>
</dbReference>
<dbReference type="GO" id="GO:0005524">
    <property type="term" value="F:ATP binding"/>
    <property type="evidence" value="ECO:0007669"/>
    <property type="project" value="UniProtKB-UniRule"/>
</dbReference>
<dbReference type="GO" id="GO:0016887">
    <property type="term" value="F:ATP hydrolysis activity"/>
    <property type="evidence" value="ECO:0007669"/>
    <property type="project" value="InterPro"/>
</dbReference>
<dbReference type="GO" id="GO:0003688">
    <property type="term" value="F:DNA replication origin binding"/>
    <property type="evidence" value="ECO:0007669"/>
    <property type="project" value="UniProtKB-UniRule"/>
</dbReference>
<dbReference type="GO" id="GO:0008289">
    <property type="term" value="F:lipid binding"/>
    <property type="evidence" value="ECO:0007669"/>
    <property type="project" value="UniProtKB-KW"/>
</dbReference>
<dbReference type="GO" id="GO:0006270">
    <property type="term" value="P:DNA replication initiation"/>
    <property type="evidence" value="ECO:0007669"/>
    <property type="project" value="UniProtKB-UniRule"/>
</dbReference>
<dbReference type="GO" id="GO:0006275">
    <property type="term" value="P:regulation of DNA replication"/>
    <property type="evidence" value="ECO:0007669"/>
    <property type="project" value="UniProtKB-UniRule"/>
</dbReference>
<dbReference type="CDD" id="cd00009">
    <property type="entry name" value="AAA"/>
    <property type="match status" value="1"/>
</dbReference>
<dbReference type="CDD" id="cd06571">
    <property type="entry name" value="Bac_DnaA_C"/>
    <property type="match status" value="1"/>
</dbReference>
<dbReference type="FunFam" id="1.10.1750.10:FF:000002">
    <property type="entry name" value="Chromosomal replication initiator protein DnaA"/>
    <property type="match status" value="1"/>
</dbReference>
<dbReference type="FunFam" id="1.10.8.60:FF:000003">
    <property type="entry name" value="Chromosomal replication initiator protein DnaA"/>
    <property type="match status" value="1"/>
</dbReference>
<dbReference type="FunFam" id="3.40.50.300:FF:000150">
    <property type="entry name" value="Chromosomal replication initiator protein DnaA"/>
    <property type="match status" value="1"/>
</dbReference>
<dbReference type="Gene3D" id="1.10.1750.10">
    <property type="match status" value="1"/>
</dbReference>
<dbReference type="Gene3D" id="1.10.8.60">
    <property type="match status" value="1"/>
</dbReference>
<dbReference type="Gene3D" id="3.30.300.180">
    <property type="match status" value="1"/>
</dbReference>
<dbReference type="Gene3D" id="3.40.50.300">
    <property type="entry name" value="P-loop containing nucleotide triphosphate hydrolases"/>
    <property type="match status" value="1"/>
</dbReference>
<dbReference type="HAMAP" id="MF_00377">
    <property type="entry name" value="DnaA_bact"/>
    <property type="match status" value="1"/>
</dbReference>
<dbReference type="InterPro" id="IPR003593">
    <property type="entry name" value="AAA+_ATPase"/>
</dbReference>
<dbReference type="InterPro" id="IPR001957">
    <property type="entry name" value="Chromosome_initiator_DnaA"/>
</dbReference>
<dbReference type="InterPro" id="IPR020591">
    <property type="entry name" value="Chromosome_initiator_DnaA-like"/>
</dbReference>
<dbReference type="InterPro" id="IPR018312">
    <property type="entry name" value="Chromosome_initiator_DnaA_CS"/>
</dbReference>
<dbReference type="InterPro" id="IPR013159">
    <property type="entry name" value="DnaA_C"/>
</dbReference>
<dbReference type="InterPro" id="IPR013317">
    <property type="entry name" value="DnaA_dom"/>
</dbReference>
<dbReference type="InterPro" id="IPR024633">
    <property type="entry name" value="DnaA_N_dom"/>
</dbReference>
<dbReference type="InterPro" id="IPR038454">
    <property type="entry name" value="DnaA_N_sf"/>
</dbReference>
<dbReference type="InterPro" id="IPR027417">
    <property type="entry name" value="P-loop_NTPase"/>
</dbReference>
<dbReference type="InterPro" id="IPR010921">
    <property type="entry name" value="Trp_repressor/repl_initiator"/>
</dbReference>
<dbReference type="NCBIfam" id="TIGR00362">
    <property type="entry name" value="DnaA"/>
    <property type="match status" value="1"/>
</dbReference>
<dbReference type="NCBIfam" id="NF010686">
    <property type="entry name" value="PRK14086.1"/>
    <property type="match status" value="1"/>
</dbReference>
<dbReference type="PANTHER" id="PTHR30050">
    <property type="entry name" value="CHROMOSOMAL REPLICATION INITIATOR PROTEIN DNAA"/>
    <property type="match status" value="1"/>
</dbReference>
<dbReference type="PANTHER" id="PTHR30050:SF2">
    <property type="entry name" value="CHROMOSOMAL REPLICATION INITIATOR PROTEIN DNAA"/>
    <property type="match status" value="1"/>
</dbReference>
<dbReference type="Pfam" id="PF00308">
    <property type="entry name" value="Bac_DnaA"/>
    <property type="match status" value="1"/>
</dbReference>
<dbReference type="Pfam" id="PF08299">
    <property type="entry name" value="Bac_DnaA_C"/>
    <property type="match status" value="1"/>
</dbReference>
<dbReference type="Pfam" id="PF11638">
    <property type="entry name" value="DnaA_N"/>
    <property type="match status" value="1"/>
</dbReference>
<dbReference type="PRINTS" id="PR00051">
    <property type="entry name" value="DNAA"/>
</dbReference>
<dbReference type="SMART" id="SM00382">
    <property type="entry name" value="AAA"/>
    <property type="match status" value="1"/>
</dbReference>
<dbReference type="SMART" id="SM00760">
    <property type="entry name" value="Bac_DnaA_C"/>
    <property type="match status" value="1"/>
</dbReference>
<dbReference type="SUPFAM" id="SSF52540">
    <property type="entry name" value="P-loop containing nucleoside triphosphate hydrolases"/>
    <property type="match status" value="1"/>
</dbReference>
<dbReference type="SUPFAM" id="SSF48295">
    <property type="entry name" value="TrpR-like"/>
    <property type="match status" value="1"/>
</dbReference>
<dbReference type="PROSITE" id="PS01008">
    <property type="entry name" value="DNAA"/>
    <property type="match status" value="1"/>
</dbReference>
<keyword id="KW-0067">ATP-binding</keyword>
<keyword id="KW-0963">Cytoplasm</keyword>
<keyword id="KW-0235">DNA replication</keyword>
<keyword id="KW-0238">DNA-binding</keyword>
<keyword id="KW-0446">Lipid-binding</keyword>
<keyword id="KW-0547">Nucleotide-binding</keyword>
<evidence type="ECO:0000255" key="1">
    <source>
        <dbReference type="HAMAP-Rule" id="MF_00377"/>
    </source>
</evidence>
<protein>
    <recommendedName>
        <fullName evidence="1">Chromosomal replication initiator protein DnaA</fullName>
    </recommendedName>
</protein>